<reference key="1">
    <citation type="journal article" date="1998" name="Science">
        <title>Genome sequence of the nematode C. elegans: a platform for investigating biology.</title>
        <authorList>
            <consortium name="The C. elegans sequencing consortium"/>
        </authorList>
    </citation>
    <scope>NUCLEOTIDE SEQUENCE [LARGE SCALE GENOMIC DNA]</scope>
    <source>
        <strain>Bristol N2</strain>
    </source>
</reference>
<accession>Q86DA7</accession>
<sequence length="177" mass="19679">MSTQIPMDPPKFLCMPARPLVVGLAVFGAIRSFVQFWMSSGFGMAGTHFCVLLLDLLLLFGAYKNDVFALKWSQRVTFACVLIAIIRFMIYPVVFASYMASGLSRNFTGIDSEEIEILGNVTTPEQNFVFGMISGFTLEFATALSIGVESLKYLLVHRLWEYAKATEASSSSRYVIP</sequence>
<protein>
    <recommendedName>
        <fullName evidence="4">Glia associated membrane protein glam-1</fullName>
    </recommendedName>
</protein>
<name>YKO8_CAEEL</name>
<gene>
    <name evidence="4" type="primary">glam-1</name>
    <name evidence="4" type="ORF">C05B5.8</name>
</gene>
<feature type="chain" id="PRO_0000065142" description="Glia associated membrane protein glam-1">
    <location>
        <begin position="1"/>
        <end position="177"/>
    </location>
</feature>
<feature type="transmembrane region" description="Helical" evidence="1">
    <location>
        <begin position="19"/>
        <end position="39"/>
    </location>
</feature>
<feature type="transmembrane region" description="Helical" evidence="1">
    <location>
        <begin position="42"/>
        <end position="62"/>
    </location>
</feature>
<feature type="transmembrane region" description="Helical" evidence="1">
    <location>
        <begin position="76"/>
        <end position="96"/>
    </location>
</feature>
<evidence type="ECO:0000255" key="1"/>
<evidence type="ECO:0000305" key="2"/>
<evidence type="ECO:0000312" key="3">
    <source>
        <dbReference type="EMBL" id="CAD90169.1"/>
    </source>
</evidence>
<evidence type="ECO:0000312" key="4">
    <source>
        <dbReference type="WormBase" id="C05B5.8"/>
    </source>
</evidence>
<comment type="subcellular location">
    <subcellularLocation>
        <location evidence="2">Membrane</location>
        <topology evidence="2">Multi-pass membrane protein</topology>
    </subcellularLocation>
</comment>
<organism evidence="3">
    <name type="scientific">Caenorhabditis elegans</name>
    <dbReference type="NCBI Taxonomy" id="6239"/>
    <lineage>
        <taxon>Eukaryota</taxon>
        <taxon>Metazoa</taxon>
        <taxon>Ecdysozoa</taxon>
        <taxon>Nematoda</taxon>
        <taxon>Chromadorea</taxon>
        <taxon>Rhabditida</taxon>
        <taxon>Rhabditina</taxon>
        <taxon>Rhabditomorpha</taxon>
        <taxon>Rhabditoidea</taxon>
        <taxon>Rhabditidae</taxon>
        <taxon>Peloderinae</taxon>
        <taxon>Caenorhabditis</taxon>
    </lineage>
</organism>
<keyword id="KW-0472">Membrane</keyword>
<keyword id="KW-1185">Reference proteome</keyword>
<keyword id="KW-0812">Transmembrane</keyword>
<keyword id="KW-1133">Transmembrane helix</keyword>
<proteinExistence type="predicted"/>
<dbReference type="EMBL" id="Z32679">
    <property type="protein sequence ID" value="CAD90169.1"/>
    <property type="molecule type" value="Genomic_DNA"/>
</dbReference>
<dbReference type="RefSeq" id="NP_001021142.1">
    <property type="nucleotide sequence ID" value="NM_001025971.8"/>
</dbReference>
<dbReference type="SMR" id="Q86DA7"/>
<dbReference type="FunCoup" id="Q86DA7">
    <property type="interactions" value="332"/>
</dbReference>
<dbReference type="PaxDb" id="6239-C05B5.8"/>
<dbReference type="PeptideAtlas" id="Q86DA7"/>
<dbReference type="EnsemblMetazoa" id="C05B5.8.1">
    <property type="protein sequence ID" value="C05B5.8.1"/>
    <property type="gene ID" value="WBGene00007324"/>
</dbReference>
<dbReference type="GeneID" id="259334"/>
<dbReference type="KEGG" id="cel:CELE_C05B5.8"/>
<dbReference type="UCSC" id="C05B5.8">
    <property type="organism name" value="c. elegans"/>
</dbReference>
<dbReference type="AGR" id="WB:WBGene00007324"/>
<dbReference type="CTD" id="259334"/>
<dbReference type="WormBase" id="C05B5.8">
    <property type="protein sequence ID" value="CE33967"/>
    <property type="gene ID" value="WBGene00007324"/>
    <property type="gene designation" value="glam-1"/>
</dbReference>
<dbReference type="eggNOG" id="ENOG502T9Y0">
    <property type="taxonomic scope" value="Eukaryota"/>
</dbReference>
<dbReference type="GeneTree" id="ENSGT00970000195991"/>
<dbReference type="HOGENOM" id="CLU_130061_0_0_1"/>
<dbReference type="InParanoid" id="Q86DA7"/>
<dbReference type="OMA" id="WEYAKAT"/>
<dbReference type="OrthoDB" id="5782508at2759"/>
<dbReference type="PhylomeDB" id="Q86DA7"/>
<dbReference type="PRO" id="PR:Q86DA7"/>
<dbReference type="Proteomes" id="UP000001940">
    <property type="component" value="Chromosome III"/>
</dbReference>
<dbReference type="Bgee" id="WBGene00007324">
    <property type="expression patterns" value="Expressed in larva and 3 other cell types or tissues"/>
</dbReference>
<dbReference type="GO" id="GO:0016020">
    <property type="term" value="C:membrane"/>
    <property type="evidence" value="ECO:0007669"/>
    <property type="project" value="UniProtKB-SubCell"/>
</dbReference>
<dbReference type="InterPro" id="IPR024483">
    <property type="entry name" value="Glam1"/>
</dbReference>
<dbReference type="PANTHER" id="PTHR35013:SF4">
    <property type="entry name" value="PROTEIN CBG09921"/>
    <property type="match status" value="1"/>
</dbReference>
<dbReference type="PANTHER" id="PTHR35013">
    <property type="entry name" value="PROTEIN CBG22618-RELATED"/>
    <property type="match status" value="1"/>
</dbReference>
<dbReference type="Pfam" id="PF10912">
    <property type="entry name" value="Glam1"/>
    <property type="match status" value="1"/>
</dbReference>